<reference key="1">
    <citation type="submission" date="2008-05" db="EMBL/GenBank/DDBJ databases">
        <title>Complete sequence of Shigella boydii serotype 18 strain BS512.</title>
        <authorList>
            <person name="Rasko D.A."/>
            <person name="Rosovitz M."/>
            <person name="Maurelli A.T."/>
            <person name="Myers G."/>
            <person name="Seshadri R."/>
            <person name="Cer R."/>
            <person name="Jiang L."/>
            <person name="Ravel J."/>
            <person name="Sebastian Y."/>
        </authorList>
    </citation>
    <scope>NUCLEOTIDE SEQUENCE [LARGE SCALE GENOMIC DNA]</scope>
    <source>
        <strain>CDC 3083-94 / BS512</strain>
    </source>
</reference>
<evidence type="ECO:0000255" key="1">
    <source>
        <dbReference type="HAMAP-Rule" id="MF_01082"/>
    </source>
</evidence>
<feature type="chain" id="PRO_1000136855" description="tRNA pseudouridine synthase D">
    <location>
        <begin position="1"/>
        <end position="349"/>
    </location>
</feature>
<feature type="domain" description="TRUD" evidence="1">
    <location>
        <begin position="155"/>
        <end position="303"/>
    </location>
</feature>
<feature type="active site" description="Nucleophile" evidence="1">
    <location>
        <position position="80"/>
    </location>
</feature>
<feature type="binding site" evidence="1">
    <location>
        <position position="27"/>
    </location>
    <ligand>
        <name>substrate</name>
    </ligand>
</feature>
<feature type="binding site" evidence="1">
    <location>
        <position position="129"/>
    </location>
    <ligand>
        <name>substrate</name>
    </ligand>
</feature>
<feature type="binding site" evidence="1">
    <location>
        <position position="329"/>
    </location>
    <ligand>
        <name>substrate</name>
    </ligand>
</feature>
<proteinExistence type="inferred from homology"/>
<comment type="function">
    <text evidence="1">Responsible for synthesis of pseudouridine from uracil-13 in transfer RNAs.</text>
</comment>
<comment type="catalytic activity">
    <reaction evidence="1">
        <text>uridine(13) in tRNA = pseudouridine(13) in tRNA</text>
        <dbReference type="Rhea" id="RHEA:42540"/>
        <dbReference type="Rhea" id="RHEA-COMP:10105"/>
        <dbReference type="Rhea" id="RHEA-COMP:10106"/>
        <dbReference type="ChEBI" id="CHEBI:65314"/>
        <dbReference type="ChEBI" id="CHEBI:65315"/>
        <dbReference type="EC" id="5.4.99.27"/>
    </reaction>
</comment>
<comment type="similarity">
    <text evidence="1">Belongs to the pseudouridine synthase TruD family.</text>
</comment>
<keyword id="KW-0413">Isomerase</keyword>
<keyword id="KW-1185">Reference proteome</keyword>
<keyword id="KW-0819">tRNA processing</keyword>
<dbReference type="EC" id="5.4.99.27" evidence="1"/>
<dbReference type="EMBL" id="CP001063">
    <property type="protein sequence ID" value="ACD08210.1"/>
    <property type="molecule type" value="Genomic_DNA"/>
</dbReference>
<dbReference type="RefSeq" id="WP_000568907.1">
    <property type="nucleotide sequence ID" value="NC_010658.1"/>
</dbReference>
<dbReference type="SMR" id="B2TZI6"/>
<dbReference type="STRING" id="344609.SbBS512_E3129"/>
<dbReference type="KEGG" id="sbc:SbBS512_E3129"/>
<dbReference type="HOGENOM" id="CLU_005281_4_0_6"/>
<dbReference type="Proteomes" id="UP000001030">
    <property type="component" value="Chromosome"/>
</dbReference>
<dbReference type="GO" id="GO:0005829">
    <property type="term" value="C:cytosol"/>
    <property type="evidence" value="ECO:0007669"/>
    <property type="project" value="TreeGrafter"/>
</dbReference>
<dbReference type="GO" id="GO:0003723">
    <property type="term" value="F:RNA binding"/>
    <property type="evidence" value="ECO:0007669"/>
    <property type="project" value="InterPro"/>
</dbReference>
<dbReference type="GO" id="GO:0160150">
    <property type="term" value="F:tRNA pseudouridine(13) synthase activity"/>
    <property type="evidence" value="ECO:0007669"/>
    <property type="project" value="UniProtKB-EC"/>
</dbReference>
<dbReference type="GO" id="GO:0031119">
    <property type="term" value="P:tRNA pseudouridine synthesis"/>
    <property type="evidence" value="ECO:0007669"/>
    <property type="project" value="UniProtKB-UniRule"/>
</dbReference>
<dbReference type="CDD" id="cd02575">
    <property type="entry name" value="PseudoU_synth_EcTruD"/>
    <property type="match status" value="1"/>
</dbReference>
<dbReference type="FunFam" id="3.30.2340.10:FF:000001">
    <property type="entry name" value="tRNA pseudouridine synthase D"/>
    <property type="match status" value="1"/>
</dbReference>
<dbReference type="FunFam" id="3.30.2350.20:FF:000001">
    <property type="entry name" value="tRNA pseudouridine synthase D"/>
    <property type="match status" value="1"/>
</dbReference>
<dbReference type="Gene3D" id="3.30.2350.20">
    <property type="entry name" value="TruD, catalytic domain"/>
    <property type="match status" value="1"/>
</dbReference>
<dbReference type="Gene3D" id="3.30.2340.10">
    <property type="entry name" value="TruD, insertion domain"/>
    <property type="match status" value="1"/>
</dbReference>
<dbReference type="HAMAP" id="MF_01082">
    <property type="entry name" value="TruD"/>
    <property type="match status" value="1"/>
</dbReference>
<dbReference type="InterPro" id="IPR020103">
    <property type="entry name" value="PsdUridine_synth_cat_dom_sf"/>
</dbReference>
<dbReference type="InterPro" id="IPR001656">
    <property type="entry name" value="PsdUridine_synth_TruD"/>
</dbReference>
<dbReference type="InterPro" id="IPR020119">
    <property type="entry name" value="PsdUridine_synth_TruD_CS"/>
</dbReference>
<dbReference type="InterPro" id="IPR011760">
    <property type="entry name" value="PsdUridine_synth_TruD_insert"/>
</dbReference>
<dbReference type="InterPro" id="IPR042214">
    <property type="entry name" value="TruD_catalytic"/>
</dbReference>
<dbReference type="InterPro" id="IPR043165">
    <property type="entry name" value="TruD_insert_sf"/>
</dbReference>
<dbReference type="InterPro" id="IPR050170">
    <property type="entry name" value="TruD_pseudoU_synthase"/>
</dbReference>
<dbReference type="NCBIfam" id="NF002155">
    <property type="entry name" value="PRK00984.1-4"/>
    <property type="match status" value="1"/>
</dbReference>
<dbReference type="NCBIfam" id="TIGR00094">
    <property type="entry name" value="tRNA_TruD_broad"/>
    <property type="match status" value="1"/>
</dbReference>
<dbReference type="PANTHER" id="PTHR47811">
    <property type="entry name" value="TRNA PSEUDOURIDINE SYNTHASE D"/>
    <property type="match status" value="1"/>
</dbReference>
<dbReference type="PANTHER" id="PTHR47811:SF1">
    <property type="entry name" value="TRNA PSEUDOURIDINE SYNTHASE D"/>
    <property type="match status" value="1"/>
</dbReference>
<dbReference type="Pfam" id="PF01142">
    <property type="entry name" value="TruD"/>
    <property type="match status" value="2"/>
</dbReference>
<dbReference type="SUPFAM" id="SSF55120">
    <property type="entry name" value="Pseudouridine synthase"/>
    <property type="match status" value="1"/>
</dbReference>
<dbReference type="PROSITE" id="PS50984">
    <property type="entry name" value="TRUD"/>
    <property type="match status" value="1"/>
</dbReference>
<dbReference type="PROSITE" id="PS01268">
    <property type="entry name" value="UPF0024"/>
    <property type="match status" value="1"/>
</dbReference>
<protein>
    <recommendedName>
        <fullName evidence="1">tRNA pseudouridine synthase D</fullName>
        <ecNumber evidence="1">5.4.99.27</ecNumber>
    </recommendedName>
    <alternativeName>
        <fullName evidence="1">tRNA pseudouridine(13) synthase</fullName>
    </alternativeName>
    <alternativeName>
        <fullName evidence="1">tRNA pseudouridylate synthase D</fullName>
    </alternativeName>
    <alternativeName>
        <fullName evidence="1">tRNA-uridine isomerase D</fullName>
    </alternativeName>
</protein>
<gene>
    <name evidence="1" type="primary">truD</name>
    <name type="ordered locus">SbBS512_E3129</name>
</gene>
<sequence>MIEFDNLTYLHGKPQGTGLLKANPEDFVVVEDLGFEPDGEGEHILVRILKNGCNTRFVADALAKFLKIHAHEVSFAGQKDKHAVTEQWLCARVPGKEMPDLSAFQLEGCQVLEYARHKRKLRLGALKGNAFTLVLREVSNRDDVEQRLIDICVKGVPNYFGAQRFGIGGSNLQGALRWAQTNTPVRDRNKRSFWLSAARSALFNQIVAERLKKADVNQVVDGDALQLAGRGSWFVATTEELAELQHRVNDKELMITAALPGSGEWGTQREALAFEQAAVAAETELQALLVREKVEAARRAMLLYPQQLSWNWWDDVTVEIRFWLPAGSFATSVVRELINTTGDYAHIAE</sequence>
<accession>B2TZI6</accession>
<name>TRUD_SHIB3</name>
<organism>
    <name type="scientific">Shigella boydii serotype 18 (strain CDC 3083-94 / BS512)</name>
    <dbReference type="NCBI Taxonomy" id="344609"/>
    <lineage>
        <taxon>Bacteria</taxon>
        <taxon>Pseudomonadati</taxon>
        <taxon>Pseudomonadota</taxon>
        <taxon>Gammaproteobacteria</taxon>
        <taxon>Enterobacterales</taxon>
        <taxon>Enterobacteriaceae</taxon>
        <taxon>Shigella</taxon>
    </lineage>
</organism>